<comment type="function">
    <text evidence="1">Catalyzes the anti-1,4-elimination of the C-3 phosphate and the C-6 proR hydrogen from 5-enolpyruvylshikimate-3-phosphate (EPSP) to yield chorismate, which is the branch point compound that serves as the starting substrate for the three terminal pathways of aromatic amino acid biosynthesis. This reaction introduces a second double bond into the aromatic ring system.</text>
</comment>
<comment type="catalytic activity">
    <reaction evidence="1">
        <text>5-O-(1-carboxyvinyl)-3-phosphoshikimate = chorismate + phosphate</text>
        <dbReference type="Rhea" id="RHEA:21020"/>
        <dbReference type="ChEBI" id="CHEBI:29748"/>
        <dbReference type="ChEBI" id="CHEBI:43474"/>
        <dbReference type="ChEBI" id="CHEBI:57701"/>
        <dbReference type="EC" id="4.2.3.5"/>
    </reaction>
</comment>
<comment type="cofactor">
    <cofactor evidence="1">
        <name>FMNH2</name>
        <dbReference type="ChEBI" id="CHEBI:57618"/>
    </cofactor>
    <text evidence="1">Reduced FMN (FMNH(2)).</text>
</comment>
<comment type="pathway">
    <text evidence="1">Metabolic intermediate biosynthesis; chorismate biosynthesis; chorismate from D-erythrose 4-phosphate and phosphoenolpyruvate: step 7/7.</text>
</comment>
<comment type="subunit">
    <text evidence="1">Homotetramer.</text>
</comment>
<comment type="similarity">
    <text evidence="1">Belongs to the chorismate synthase family.</text>
</comment>
<reference key="1">
    <citation type="journal article" date="2006" name="Proc. Natl. Acad. Sci. U.S.A.">
        <title>Comparative genomics of the lactic acid bacteria.</title>
        <authorList>
            <person name="Makarova K.S."/>
            <person name="Slesarev A."/>
            <person name="Wolf Y.I."/>
            <person name="Sorokin A."/>
            <person name="Mirkin B."/>
            <person name="Koonin E.V."/>
            <person name="Pavlov A."/>
            <person name="Pavlova N."/>
            <person name="Karamychev V."/>
            <person name="Polouchine N."/>
            <person name="Shakhova V."/>
            <person name="Grigoriev I."/>
            <person name="Lou Y."/>
            <person name="Rohksar D."/>
            <person name="Lucas S."/>
            <person name="Huang K."/>
            <person name="Goodstein D.M."/>
            <person name="Hawkins T."/>
            <person name="Plengvidhya V."/>
            <person name="Welker D."/>
            <person name="Hughes J."/>
            <person name="Goh Y."/>
            <person name="Benson A."/>
            <person name="Baldwin K."/>
            <person name="Lee J.-H."/>
            <person name="Diaz-Muniz I."/>
            <person name="Dosti B."/>
            <person name="Smeianov V."/>
            <person name="Wechter W."/>
            <person name="Barabote R."/>
            <person name="Lorca G."/>
            <person name="Altermann E."/>
            <person name="Barrangou R."/>
            <person name="Ganesan B."/>
            <person name="Xie Y."/>
            <person name="Rawsthorne H."/>
            <person name="Tamir D."/>
            <person name="Parker C."/>
            <person name="Breidt F."/>
            <person name="Broadbent J.R."/>
            <person name="Hutkins R."/>
            <person name="O'Sullivan D."/>
            <person name="Steele J."/>
            <person name="Unlu G."/>
            <person name="Saier M.H. Jr."/>
            <person name="Klaenhammer T."/>
            <person name="Richardson P."/>
            <person name="Kozyavkin S."/>
            <person name="Weimer B.C."/>
            <person name="Mills D.A."/>
        </authorList>
    </citation>
    <scope>NUCLEOTIDE SEQUENCE [LARGE SCALE GENOMIC DNA]</scope>
    <source>
        <strain>ATCC 8293 / DSM 20343 / BCRC 11652 / CCM 1803 / JCM 6124 / NCDO 523 / NBRC 100496 / NCIMB 8023 / NCTC 12954 / NRRL B-1118 / 37Y</strain>
    </source>
</reference>
<evidence type="ECO:0000255" key="1">
    <source>
        <dbReference type="HAMAP-Rule" id="MF_00300"/>
    </source>
</evidence>
<sequence>MRYVTAGESHGPEEIAVIEGIPAGLHISQEDVNEQLARRQRGYGRGERQKIETDTVTFLTGVRHQTTLGSPITLNVHNDDHNNWSKIMAPNEPATAENTLRKVLRPRPGHADLVGGMKYRHREDLRNVLERSSARETTMRVAVGAVAKKLLSEIGVDVHGFVVNVGPAKSDLNELTKYKNLQELRVVTEGFDTRALNAEADEAIKEVIDKTKRDANTVGGQVQVIATGMPVGLGSYVSADTKLDAKIANAIVGINAFKGVQFGGGFDNAEKYGDQVMDEIFWDEERGFYRGSDNLGGFEGGMTTGEAIVVRGVVKPIPTLYRPMQSVDIDTHEDHRASIERSDTTAVTAAAVIAEAMVAIELAKAVLDKFDADNIERMKEQVAVYREEIRKF</sequence>
<name>AROC_LEUMM</name>
<organism>
    <name type="scientific">Leuconostoc mesenteroides subsp. mesenteroides (strain ATCC 8293 / DSM 20343 / BCRC 11652 / CCM 1803 / JCM 6124 / NCDO 523 / NBRC 100496 / NCIMB 8023 / NCTC 12954 / NRRL B-1118 / 37Y)</name>
    <dbReference type="NCBI Taxonomy" id="203120"/>
    <lineage>
        <taxon>Bacteria</taxon>
        <taxon>Bacillati</taxon>
        <taxon>Bacillota</taxon>
        <taxon>Bacilli</taxon>
        <taxon>Lactobacillales</taxon>
        <taxon>Lactobacillaceae</taxon>
        <taxon>Leuconostoc</taxon>
    </lineage>
</organism>
<gene>
    <name evidence="1" type="primary">aroC</name>
    <name type="ordered locus">LEUM_1165</name>
</gene>
<proteinExistence type="inferred from homology"/>
<protein>
    <recommendedName>
        <fullName evidence="1">Chorismate synthase</fullName>
        <shortName evidence="1">CS</shortName>
        <ecNumber evidence="1">4.2.3.5</ecNumber>
    </recommendedName>
    <alternativeName>
        <fullName evidence="1">5-enolpyruvylshikimate-3-phosphate phospholyase</fullName>
    </alternativeName>
</protein>
<dbReference type="EC" id="4.2.3.5" evidence="1"/>
<dbReference type="EMBL" id="CP000414">
    <property type="protein sequence ID" value="ABJ62263.1"/>
    <property type="molecule type" value="Genomic_DNA"/>
</dbReference>
<dbReference type="RefSeq" id="WP_011679899.1">
    <property type="nucleotide sequence ID" value="NC_008531.1"/>
</dbReference>
<dbReference type="SMR" id="Q03X09"/>
<dbReference type="EnsemblBacteria" id="ABJ62263">
    <property type="protein sequence ID" value="ABJ62263"/>
    <property type="gene ID" value="LEUM_1165"/>
</dbReference>
<dbReference type="GeneID" id="29575800"/>
<dbReference type="KEGG" id="lme:LEUM_1165"/>
<dbReference type="eggNOG" id="COG0082">
    <property type="taxonomic scope" value="Bacteria"/>
</dbReference>
<dbReference type="HOGENOM" id="CLU_034547_2_0_9"/>
<dbReference type="UniPathway" id="UPA00053">
    <property type="reaction ID" value="UER00090"/>
</dbReference>
<dbReference type="Proteomes" id="UP000000362">
    <property type="component" value="Chromosome"/>
</dbReference>
<dbReference type="GO" id="GO:0005829">
    <property type="term" value="C:cytosol"/>
    <property type="evidence" value="ECO:0007669"/>
    <property type="project" value="TreeGrafter"/>
</dbReference>
<dbReference type="GO" id="GO:0004107">
    <property type="term" value="F:chorismate synthase activity"/>
    <property type="evidence" value="ECO:0007669"/>
    <property type="project" value="UniProtKB-UniRule"/>
</dbReference>
<dbReference type="GO" id="GO:0010181">
    <property type="term" value="F:FMN binding"/>
    <property type="evidence" value="ECO:0007669"/>
    <property type="project" value="TreeGrafter"/>
</dbReference>
<dbReference type="GO" id="GO:0008652">
    <property type="term" value="P:amino acid biosynthetic process"/>
    <property type="evidence" value="ECO:0007669"/>
    <property type="project" value="UniProtKB-KW"/>
</dbReference>
<dbReference type="GO" id="GO:0009073">
    <property type="term" value="P:aromatic amino acid family biosynthetic process"/>
    <property type="evidence" value="ECO:0007669"/>
    <property type="project" value="UniProtKB-KW"/>
</dbReference>
<dbReference type="GO" id="GO:0009423">
    <property type="term" value="P:chorismate biosynthetic process"/>
    <property type="evidence" value="ECO:0007669"/>
    <property type="project" value="UniProtKB-UniRule"/>
</dbReference>
<dbReference type="CDD" id="cd07304">
    <property type="entry name" value="Chorismate_synthase"/>
    <property type="match status" value="1"/>
</dbReference>
<dbReference type="FunFam" id="3.60.150.10:FF:000002">
    <property type="entry name" value="Chorismate synthase"/>
    <property type="match status" value="1"/>
</dbReference>
<dbReference type="Gene3D" id="3.60.150.10">
    <property type="entry name" value="Chorismate synthase AroC"/>
    <property type="match status" value="1"/>
</dbReference>
<dbReference type="HAMAP" id="MF_00300">
    <property type="entry name" value="Chorismate_synth"/>
    <property type="match status" value="1"/>
</dbReference>
<dbReference type="InterPro" id="IPR000453">
    <property type="entry name" value="Chorismate_synth"/>
</dbReference>
<dbReference type="InterPro" id="IPR035904">
    <property type="entry name" value="Chorismate_synth_AroC_sf"/>
</dbReference>
<dbReference type="InterPro" id="IPR020541">
    <property type="entry name" value="Chorismate_synthase_CS"/>
</dbReference>
<dbReference type="NCBIfam" id="TIGR00033">
    <property type="entry name" value="aroC"/>
    <property type="match status" value="1"/>
</dbReference>
<dbReference type="NCBIfam" id="NF003793">
    <property type="entry name" value="PRK05382.1"/>
    <property type="match status" value="1"/>
</dbReference>
<dbReference type="PANTHER" id="PTHR21085">
    <property type="entry name" value="CHORISMATE SYNTHASE"/>
    <property type="match status" value="1"/>
</dbReference>
<dbReference type="PANTHER" id="PTHR21085:SF0">
    <property type="entry name" value="CHORISMATE SYNTHASE"/>
    <property type="match status" value="1"/>
</dbReference>
<dbReference type="Pfam" id="PF01264">
    <property type="entry name" value="Chorismate_synt"/>
    <property type="match status" value="1"/>
</dbReference>
<dbReference type="PIRSF" id="PIRSF001456">
    <property type="entry name" value="Chorismate_synth"/>
    <property type="match status" value="1"/>
</dbReference>
<dbReference type="SUPFAM" id="SSF103263">
    <property type="entry name" value="Chorismate synthase, AroC"/>
    <property type="match status" value="1"/>
</dbReference>
<dbReference type="PROSITE" id="PS00788">
    <property type="entry name" value="CHORISMATE_SYNTHASE_2"/>
    <property type="match status" value="1"/>
</dbReference>
<feature type="chain" id="PRO_1000022508" description="Chorismate synthase">
    <location>
        <begin position="1"/>
        <end position="392"/>
    </location>
</feature>
<feature type="binding site" evidence="1">
    <location>
        <position position="39"/>
    </location>
    <ligand>
        <name>NADP(+)</name>
        <dbReference type="ChEBI" id="CHEBI:58349"/>
    </ligand>
</feature>
<feature type="binding site" evidence="1">
    <location>
        <position position="45"/>
    </location>
    <ligand>
        <name>NADP(+)</name>
        <dbReference type="ChEBI" id="CHEBI:58349"/>
    </ligand>
</feature>
<feature type="binding site" evidence="1">
    <location>
        <begin position="131"/>
        <end position="133"/>
    </location>
    <ligand>
        <name>FMN</name>
        <dbReference type="ChEBI" id="CHEBI:58210"/>
    </ligand>
</feature>
<feature type="binding site" evidence="1">
    <location>
        <begin position="255"/>
        <end position="256"/>
    </location>
    <ligand>
        <name>FMN</name>
        <dbReference type="ChEBI" id="CHEBI:58210"/>
    </ligand>
</feature>
<feature type="binding site" evidence="1">
    <location>
        <position position="300"/>
    </location>
    <ligand>
        <name>FMN</name>
        <dbReference type="ChEBI" id="CHEBI:58210"/>
    </ligand>
</feature>
<feature type="binding site" evidence="1">
    <location>
        <begin position="315"/>
        <end position="319"/>
    </location>
    <ligand>
        <name>FMN</name>
        <dbReference type="ChEBI" id="CHEBI:58210"/>
    </ligand>
</feature>
<feature type="binding site" evidence="1">
    <location>
        <position position="341"/>
    </location>
    <ligand>
        <name>FMN</name>
        <dbReference type="ChEBI" id="CHEBI:58210"/>
    </ligand>
</feature>
<keyword id="KW-0028">Amino-acid biosynthesis</keyword>
<keyword id="KW-0057">Aromatic amino acid biosynthesis</keyword>
<keyword id="KW-0274">FAD</keyword>
<keyword id="KW-0285">Flavoprotein</keyword>
<keyword id="KW-0288">FMN</keyword>
<keyword id="KW-0456">Lyase</keyword>
<keyword id="KW-0521">NADP</keyword>
<keyword id="KW-1185">Reference proteome</keyword>
<accession>Q03X09</accession>